<evidence type="ECO:0000255" key="1">
    <source>
        <dbReference type="HAMAP-Rule" id="MF_01008"/>
    </source>
</evidence>
<evidence type="ECO:0000255" key="2">
    <source>
        <dbReference type="PROSITE-ProRule" id="PRU01076"/>
    </source>
</evidence>
<name>MRAZ_THET8</name>
<reference key="1">
    <citation type="submission" date="2004-11" db="EMBL/GenBank/DDBJ databases">
        <title>Complete genome sequence of Thermus thermophilus HB8.</title>
        <authorList>
            <person name="Masui R."/>
            <person name="Kurokawa K."/>
            <person name="Nakagawa N."/>
            <person name="Tokunaga F."/>
            <person name="Koyama Y."/>
            <person name="Shibata T."/>
            <person name="Oshima T."/>
            <person name="Yokoyama S."/>
            <person name="Yasunaga T."/>
            <person name="Kuramitsu S."/>
        </authorList>
    </citation>
    <scope>NUCLEOTIDE SEQUENCE [LARGE SCALE GENOMIC DNA]</scope>
    <source>
        <strain>ATCC 27634 / DSM 579 / HB8</strain>
    </source>
</reference>
<feature type="chain" id="PRO_0000108549" description="Transcriptional regulator MraZ">
    <location>
        <begin position="1"/>
        <end position="144"/>
    </location>
</feature>
<feature type="domain" description="SpoVT-AbrB 1" evidence="2">
    <location>
        <begin position="5"/>
        <end position="47"/>
    </location>
</feature>
<feature type="domain" description="SpoVT-AbrB 2" evidence="2">
    <location>
        <begin position="76"/>
        <end position="121"/>
    </location>
</feature>
<sequence length="144" mass="16202">MPFGEYQYSLDDKGRVVIPAPFRDFVEDGLVLTRGMEGCLYVFPLDRWKKIEEQLVNLPLTDAEARAFVRFFYSGAHKTRMDSASRVLIPPPLRLFAGLKEGGEVVIAGAPGRLEIWSQERWWKAIEEVLAKPPAPEALKGLVG</sequence>
<proteinExistence type="inferred from homology"/>
<dbReference type="EMBL" id="AP008226">
    <property type="protein sequence ID" value="BAD70898.1"/>
    <property type="molecule type" value="Genomic_DNA"/>
</dbReference>
<dbReference type="RefSeq" id="WP_008632499.1">
    <property type="nucleotide sequence ID" value="NC_006461.1"/>
</dbReference>
<dbReference type="RefSeq" id="YP_144341.1">
    <property type="nucleotide sequence ID" value="NC_006461.1"/>
</dbReference>
<dbReference type="SMR" id="Q5SJD9"/>
<dbReference type="EnsemblBacteria" id="BAD70898">
    <property type="protein sequence ID" value="BAD70898"/>
    <property type="gene ID" value="BAD70898"/>
</dbReference>
<dbReference type="GeneID" id="3168807"/>
<dbReference type="KEGG" id="ttj:TTHA1075"/>
<dbReference type="PATRIC" id="fig|300852.9.peg.1055"/>
<dbReference type="eggNOG" id="COG2001">
    <property type="taxonomic scope" value="Bacteria"/>
</dbReference>
<dbReference type="HOGENOM" id="CLU_107907_0_3_0"/>
<dbReference type="PhylomeDB" id="Q5SJD9"/>
<dbReference type="Proteomes" id="UP000000532">
    <property type="component" value="Chromosome"/>
</dbReference>
<dbReference type="GO" id="GO:0005737">
    <property type="term" value="C:cytoplasm"/>
    <property type="evidence" value="ECO:0007669"/>
    <property type="project" value="UniProtKB-UniRule"/>
</dbReference>
<dbReference type="GO" id="GO:0009295">
    <property type="term" value="C:nucleoid"/>
    <property type="evidence" value="ECO:0007669"/>
    <property type="project" value="UniProtKB-SubCell"/>
</dbReference>
<dbReference type="GO" id="GO:0003700">
    <property type="term" value="F:DNA-binding transcription factor activity"/>
    <property type="evidence" value="ECO:0007669"/>
    <property type="project" value="UniProtKB-UniRule"/>
</dbReference>
<dbReference type="GO" id="GO:0000976">
    <property type="term" value="F:transcription cis-regulatory region binding"/>
    <property type="evidence" value="ECO:0007669"/>
    <property type="project" value="TreeGrafter"/>
</dbReference>
<dbReference type="GO" id="GO:2000143">
    <property type="term" value="P:negative regulation of DNA-templated transcription initiation"/>
    <property type="evidence" value="ECO:0007669"/>
    <property type="project" value="TreeGrafter"/>
</dbReference>
<dbReference type="CDD" id="cd16321">
    <property type="entry name" value="MraZ_C"/>
    <property type="match status" value="1"/>
</dbReference>
<dbReference type="CDD" id="cd16320">
    <property type="entry name" value="MraZ_N"/>
    <property type="match status" value="1"/>
</dbReference>
<dbReference type="Gene3D" id="3.40.1550.20">
    <property type="entry name" value="Transcriptional regulator MraZ domain"/>
    <property type="match status" value="1"/>
</dbReference>
<dbReference type="HAMAP" id="MF_01008">
    <property type="entry name" value="MraZ"/>
    <property type="match status" value="1"/>
</dbReference>
<dbReference type="InterPro" id="IPR003444">
    <property type="entry name" value="MraZ"/>
</dbReference>
<dbReference type="InterPro" id="IPR035644">
    <property type="entry name" value="MraZ_C"/>
</dbReference>
<dbReference type="InterPro" id="IPR020603">
    <property type="entry name" value="MraZ_dom"/>
</dbReference>
<dbReference type="InterPro" id="IPR035642">
    <property type="entry name" value="MraZ_N"/>
</dbReference>
<dbReference type="InterPro" id="IPR038619">
    <property type="entry name" value="MraZ_sf"/>
</dbReference>
<dbReference type="InterPro" id="IPR007159">
    <property type="entry name" value="SpoVT-AbrB_dom"/>
</dbReference>
<dbReference type="InterPro" id="IPR037914">
    <property type="entry name" value="SpoVT-AbrB_sf"/>
</dbReference>
<dbReference type="NCBIfam" id="TIGR00242">
    <property type="entry name" value="division/cell wall cluster transcriptional repressor MraZ"/>
    <property type="match status" value="1"/>
</dbReference>
<dbReference type="PANTHER" id="PTHR34701">
    <property type="entry name" value="TRANSCRIPTIONAL REGULATOR MRAZ"/>
    <property type="match status" value="1"/>
</dbReference>
<dbReference type="PANTHER" id="PTHR34701:SF1">
    <property type="entry name" value="TRANSCRIPTIONAL REGULATOR MRAZ"/>
    <property type="match status" value="1"/>
</dbReference>
<dbReference type="Pfam" id="PF02381">
    <property type="entry name" value="MraZ"/>
    <property type="match status" value="2"/>
</dbReference>
<dbReference type="SUPFAM" id="SSF89447">
    <property type="entry name" value="AbrB/MazE/MraZ-like"/>
    <property type="match status" value="1"/>
</dbReference>
<dbReference type="PROSITE" id="PS51740">
    <property type="entry name" value="SPOVT_ABRB"/>
    <property type="match status" value="2"/>
</dbReference>
<protein>
    <recommendedName>
        <fullName>Transcriptional regulator MraZ</fullName>
    </recommendedName>
</protein>
<organism>
    <name type="scientific">Thermus thermophilus (strain ATCC 27634 / DSM 579 / HB8)</name>
    <dbReference type="NCBI Taxonomy" id="300852"/>
    <lineage>
        <taxon>Bacteria</taxon>
        <taxon>Thermotogati</taxon>
        <taxon>Deinococcota</taxon>
        <taxon>Deinococci</taxon>
        <taxon>Thermales</taxon>
        <taxon>Thermaceae</taxon>
        <taxon>Thermus</taxon>
    </lineage>
</organism>
<keyword id="KW-0963">Cytoplasm</keyword>
<keyword id="KW-0238">DNA-binding</keyword>
<keyword id="KW-1185">Reference proteome</keyword>
<keyword id="KW-0677">Repeat</keyword>
<keyword id="KW-0804">Transcription</keyword>
<keyword id="KW-0805">Transcription regulation</keyword>
<gene>
    <name evidence="1" type="primary">mraZ</name>
    <name type="ordered locus">TTHA1075</name>
</gene>
<comment type="subunit">
    <text evidence="1">Forms oligomers.</text>
</comment>
<comment type="subcellular location">
    <subcellularLocation>
        <location evidence="1">Cytoplasm</location>
        <location evidence="1">Nucleoid</location>
    </subcellularLocation>
</comment>
<comment type="similarity">
    <text evidence="1">Belongs to the MraZ family.</text>
</comment>
<accession>Q5SJD9</accession>